<organism>
    <name type="scientific">Leuconostoc citreum (strain KM20)</name>
    <dbReference type="NCBI Taxonomy" id="349519"/>
    <lineage>
        <taxon>Bacteria</taxon>
        <taxon>Bacillati</taxon>
        <taxon>Bacillota</taxon>
        <taxon>Bacilli</taxon>
        <taxon>Lactobacillales</taxon>
        <taxon>Lactobacillaceae</taxon>
        <taxon>Leuconostoc</taxon>
    </lineage>
</organism>
<gene>
    <name evidence="1" type="primary">ybeY</name>
    <name type="ordered locus">LCK_00711</name>
</gene>
<sequence>MDLAIIDQTHDGVSRYHHDLVESVLNFAGEALKLPVNTEMSVTFVNNDEIQRYNRDYRGVDKPTDVISFAIEEGEDDFNIISDDAWTEDIAKNIGDIIVSVDIIGAQAEYLGHSYERELGFLVVHGFLHLNGYDHMLGDAEEKEMFDLQREILDNYGLKR</sequence>
<protein>
    <recommendedName>
        <fullName evidence="1">Endoribonuclease YbeY</fullName>
        <ecNumber evidence="1">3.1.-.-</ecNumber>
    </recommendedName>
</protein>
<proteinExistence type="inferred from homology"/>
<name>YBEY_LEUCK</name>
<evidence type="ECO:0000255" key="1">
    <source>
        <dbReference type="HAMAP-Rule" id="MF_00009"/>
    </source>
</evidence>
<reference key="1">
    <citation type="journal article" date="2008" name="J. Bacteriol.">
        <title>Complete genome sequence of Leuconostoc citreum KM20.</title>
        <authorList>
            <person name="Kim J.F."/>
            <person name="Jeong H."/>
            <person name="Lee J.-S."/>
            <person name="Choi S.-H."/>
            <person name="Ha M."/>
            <person name="Hur C.-G."/>
            <person name="Kim J.-S."/>
            <person name="Lee S."/>
            <person name="Park H.-S."/>
            <person name="Park Y.-H."/>
            <person name="Oh T.K."/>
        </authorList>
    </citation>
    <scope>NUCLEOTIDE SEQUENCE [LARGE SCALE GENOMIC DNA]</scope>
    <source>
        <strain>KM20</strain>
    </source>
</reference>
<accession>B1MYE1</accession>
<comment type="function">
    <text evidence="1">Single strand-specific metallo-endoribonuclease involved in late-stage 70S ribosome quality control and in maturation of the 3' terminus of the 16S rRNA.</text>
</comment>
<comment type="cofactor">
    <cofactor evidence="1">
        <name>Zn(2+)</name>
        <dbReference type="ChEBI" id="CHEBI:29105"/>
    </cofactor>
    <text evidence="1">Binds 1 zinc ion.</text>
</comment>
<comment type="subcellular location">
    <subcellularLocation>
        <location evidence="1">Cytoplasm</location>
    </subcellularLocation>
</comment>
<comment type="similarity">
    <text evidence="1">Belongs to the endoribonuclease YbeY family.</text>
</comment>
<keyword id="KW-0963">Cytoplasm</keyword>
<keyword id="KW-0255">Endonuclease</keyword>
<keyword id="KW-0378">Hydrolase</keyword>
<keyword id="KW-0479">Metal-binding</keyword>
<keyword id="KW-0540">Nuclease</keyword>
<keyword id="KW-1185">Reference proteome</keyword>
<keyword id="KW-0690">Ribosome biogenesis</keyword>
<keyword id="KW-0698">rRNA processing</keyword>
<keyword id="KW-0862">Zinc</keyword>
<dbReference type="EC" id="3.1.-.-" evidence="1"/>
<dbReference type="EMBL" id="DQ489736">
    <property type="protein sequence ID" value="ACA82543.1"/>
    <property type="molecule type" value="Genomic_DNA"/>
</dbReference>
<dbReference type="RefSeq" id="WP_004907012.1">
    <property type="nucleotide sequence ID" value="NC_010471.1"/>
</dbReference>
<dbReference type="SMR" id="B1MYE1"/>
<dbReference type="STRING" id="349519.LCK_00711"/>
<dbReference type="KEGG" id="lci:LCK_00711"/>
<dbReference type="eggNOG" id="COG0319">
    <property type="taxonomic scope" value="Bacteria"/>
</dbReference>
<dbReference type="HOGENOM" id="CLU_106710_3_0_9"/>
<dbReference type="OrthoDB" id="9807740at2"/>
<dbReference type="Proteomes" id="UP000002166">
    <property type="component" value="Chromosome"/>
</dbReference>
<dbReference type="GO" id="GO:0005737">
    <property type="term" value="C:cytoplasm"/>
    <property type="evidence" value="ECO:0007669"/>
    <property type="project" value="UniProtKB-SubCell"/>
</dbReference>
<dbReference type="GO" id="GO:0004222">
    <property type="term" value="F:metalloendopeptidase activity"/>
    <property type="evidence" value="ECO:0007669"/>
    <property type="project" value="InterPro"/>
</dbReference>
<dbReference type="GO" id="GO:0004521">
    <property type="term" value="F:RNA endonuclease activity"/>
    <property type="evidence" value="ECO:0007669"/>
    <property type="project" value="UniProtKB-UniRule"/>
</dbReference>
<dbReference type="GO" id="GO:0008270">
    <property type="term" value="F:zinc ion binding"/>
    <property type="evidence" value="ECO:0007669"/>
    <property type="project" value="UniProtKB-UniRule"/>
</dbReference>
<dbReference type="GO" id="GO:0006364">
    <property type="term" value="P:rRNA processing"/>
    <property type="evidence" value="ECO:0007669"/>
    <property type="project" value="UniProtKB-UniRule"/>
</dbReference>
<dbReference type="Gene3D" id="3.40.390.30">
    <property type="entry name" value="Metalloproteases ('zincins'), catalytic domain"/>
    <property type="match status" value="1"/>
</dbReference>
<dbReference type="HAMAP" id="MF_00009">
    <property type="entry name" value="Endoribonucl_YbeY"/>
    <property type="match status" value="1"/>
</dbReference>
<dbReference type="InterPro" id="IPR023091">
    <property type="entry name" value="MetalPrtase_cat_dom_sf_prd"/>
</dbReference>
<dbReference type="InterPro" id="IPR002036">
    <property type="entry name" value="YbeY"/>
</dbReference>
<dbReference type="InterPro" id="IPR020549">
    <property type="entry name" value="YbeY_CS"/>
</dbReference>
<dbReference type="NCBIfam" id="TIGR00043">
    <property type="entry name" value="rRNA maturation RNase YbeY"/>
    <property type="match status" value="1"/>
</dbReference>
<dbReference type="PANTHER" id="PTHR46986">
    <property type="entry name" value="ENDORIBONUCLEASE YBEY, CHLOROPLASTIC"/>
    <property type="match status" value="1"/>
</dbReference>
<dbReference type="PANTHER" id="PTHR46986:SF1">
    <property type="entry name" value="ENDORIBONUCLEASE YBEY, CHLOROPLASTIC"/>
    <property type="match status" value="1"/>
</dbReference>
<dbReference type="Pfam" id="PF02130">
    <property type="entry name" value="YbeY"/>
    <property type="match status" value="1"/>
</dbReference>
<dbReference type="SUPFAM" id="SSF55486">
    <property type="entry name" value="Metalloproteases ('zincins'), catalytic domain"/>
    <property type="match status" value="1"/>
</dbReference>
<dbReference type="PROSITE" id="PS01306">
    <property type="entry name" value="UPF0054"/>
    <property type="match status" value="1"/>
</dbReference>
<feature type="chain" id="PRO_1000089190" description="Endoribonuclease YbeY">
    <location>
        <begin position="1"/>
        <end position="160"/>
    </location>
</feature>
<feature type="binding site" evidence="1">
    <location>
        <position position="125"/>
    </location>
    <ligand>
        <name>Zn(2+)</name>
        <dbReference type="ChEBI" id="CHEBI:29105"/>
        <note>catalytic</note>
    </ligand>
</feature>
<feature type="binding site" evidence="1">
    <location>
        <position position="129"/>
    </location>
    <ligand>
        <name>Zn(2+)</name>
        <dbReference type="ChEBI" id="CHEBI:29105"/>
        <note>catalytic</note>
    </ligand>
</feature>
<feature type="binding site" evidence="1">
    <location>
        <position position="135"/>
    </location>
    <ligand>
        <name>Zn(2+)</name>
        <dbReference type="ChEBI" id="CHEBI:29105"/>
        <note>catalytic</note>
    </ligand>
</feature>